<name>KTHY_AGRFC</name>
<sequence length="224" mass="24501">MAEKTGLFISFEGGEGAGKSTQIRTLAEALRGRGFEVVVTREPGGSPGAEAVRHVILSGAAESFGVRMEAILFAAARNDHVEEVIRPALARGEIVLCDRFLDSSRVYQGTTGNLEPDFIETLQRIAIDGVVPELTLIFDIAAEKGLARARKRADEGATPDRFEKEEIETHEKRREAYLDIALAEPRRCRIVNADQPEDKVTEDVMSFVEPLLERAGNAADAAHE</sequence>
<gene>
    <name evidence="1" type="primary">tmk</name>
    <name type="ordered locus">Atu1498</name>
    <name type="ORF">AGR_C_2760</name>
</gene>
<organism>
    <name type="scientific">Agrobacterium fabrum (strain C58 / ATCC 33970)</name>
    <name type="common">Agrobacterium tumefaciens (strain C58)</name>
    <dbReference type="NCBI Taxonomy" id="176299"/>
    <lineage>
        <taxon>Bacteria</taxon>
        <taxon>Pseudomonadati</taxon>
        <taxon>Pseudomonadota</taxon>
        <taxon>Alphaproteobacteria</taxon>
        <taxon>Hyphomicrobiales</taxon>
        <taxon>Rhizobiaceae</taxon>
        <taxon>Rhizobium/Agrobacterium group</taxon>
        <taxon>Agrobacterium</taxon>
        <taxon>Agrobacterium tumefaciens complex</taxon>
    </lineage>
</organism>
<accession>Q8UFA0</accession>
<proteinExistence type="inferred from homology"/>
<protein>
    <recommendedName>
        <fullName evidence="1">Thymidylate kinase</fullName>
        <ecNumber evidence="1">2.7.4.9</ecNumber>
    </recommendedName>
    <alternativeName>
        <fullName evidence="1">dTMP kinase</fullName>
    </alternativeName>
</protein>
<dbReference type="EC" id="2.7.4.9" evidence="1"/>
<dbReference type="EMBL" id="AE007869">
    <property type="protein sequence ID" value="AAK87289.2"/>
    <property type="status" value="ALT_INIT"/>
    <property type="molecule type" value="Genomic_DNA"/>
</dbReference>
<dbReference type="PIR" id="AB2761">
    <property type="entry name" value="AB2761"/>
</dbReference>
<dbReference type="PIR" id="H97541">
    <property type="entry name" value="H97541"/>
</dbReference>
<dbReference type="RefSeq" id="NP_354504.2">
    <property type="nucleotide sequence ID" value="NC_003062.2"/>
</dbReference>
<dbReference type="RefSeq" id="WP_035216759.1">
    <property type="nucleotide sequence ID" value="NC_003062.2"/>
</dbReference>
<dbReference type="SMR" id="Q8UFA0"/>
<dbReference type="STRING" id="176299.Atu1498"/>
<dbReference type="EnsemblBacteria" id="AAK87289">
    <property type="protein sequence ID" value="AAK87289"/>
    <property type="gene ID" value="Atu1498"/>
</dbReference>
<dbReference type="GeneID" id="1133536"/>
<dbReference type="KEGG" id="atu:Atu1498"/>
<dbReference type="PATRIC" id="fig|176299.10.peg.1524"/>
<dbReference type="eggNOG" id="COG0125">
    <property type="taxonomic scope" value="Bacteria"/>
</dbReference>
<dbReference type="HOGENOM" id="CLU_049131_0_0_5"/>
<dbReference type="OrthoDB" id="9774907at2"/>
<dbReference type="Proteomes" id="UP000000813">
    <property type="component" value="Chromosome circular"/>
</dbReference>
<dbReference type="GO" id="GO:0005829">
    <property type="term" value="C:cytosol"/>
    <property type="evidence" value="ECO:0007669"/>
    <property type="project" value="TreeGrafter"/>
</dbReference>
<dbReference type="GO" id="GO:0005524">
    <property type="term" value="F:ATP binding"/>
    <property type="evidence" value="ECO:0007669"/>
    <property type="project" value="UniProtKB-UniRule"/>
</dbReference>
<dbReference type="GO" id="GO:0004798">
    <property type="term" value="F:dTMP kinase activity"/>
    <property type="evidence" value="ECO:0007669"/>
    <property type="project" value="UniProtKB-UniRule"/>
</dbReference>
<dbReference type="GO" id="GO:0006233">
    <property type="term" value="P:dTDP biosynthetic process"/>
    <property type="evidence" value="ECO:0007669"/>
    <property type="project" value="InterPro"/>
</dbReference>
<dbReference type="GO" id="GO:0006235">
    <property type="term" value="P:dTTP biosynthetic process"/>
    <property type="evidence" value="ECO:0007669"/>
    <property type="project" value="UniProtKB-UniRule"/>
</dbReference>
<dbReference type="GO" id="GO:0006227">
    <property type="term" value="P:dUDP biosynthetic process"/>
    <property type="evidence" value="ECO:0007669"/>
    <property type="project" value="TreeGrafter"/>
</dbReference>
<dbReference type="CDD" id="cd01672">
    <property type="entry name" value="TMPK"/>
    <property type="match status" value="1"/>
</dbReference>
<dbReference type="FunFam" id="3.40.50.300:FF:000225">
    <property type="entry name" value="Thymidylate kinase"/>
    <property type="match status" value="1"/>
</dbReference>
<dbReference type="Gene3D" id="3.40.50.300">
    <property type="entry name" value="P-loop containing nucleotide triphosphate hydrolases"/>
    <property type="match status" value="1"/>
</dbReference>
<dbReference type="HAMAP" id="MF_00165">
    <property type="entry name" value="Thymidylate_kinase"/>
    <property type="match status" value="1"/>
</dbReference>
<dbReference type="InterPro" id="IPR027417">
    <property type="entry name" value="P-loop_NTPase"/>
</dbReference>
<dbReference type="InterPro" id="IPR039430">
    <property type="entry name" value="Thymidylate_kin-like_dom"/>
</dbReference>
<dbReference type="InterPro" id="IPR018095">
    <property type="entry name" value="Thymidylate_kin_CS"/>
</dbReference>
<dbReference type="InterPro" id="IPR018094">
    <property type="entry name" value="Thymidylate_kinase"/>
</dbReference>
<dbReference type="NCBIfam" id="TIGR00041">
    <property type="entry name" value="DTMP_kinase"/>
    <property type="match status" value="1"/>
</dbReference>
<dbReference type="PANTHER" id="PTHR10344">
    <property type="entry name" value="THYMIDYLATE KINASE"/>
    <property type="match status" value="1"/>
</dbReference>
<dbReference type="PANTHER" id="PTHR10344:SF4">
    <property type="entry name" value="UMP-CMP KINASE 2, MITOCHONDRIAL"/>
    <property type="match status" value="1"/>
</dbReference>
<dbReference type="Pfam" id="PF02223">
    <property type="entry name" value="Thymidylate_kin"/>
    <property type="match status" value="1"/>
</dbReference>
<dbReference type="SUPFAM" id="SSF52540">
    <property type="entry name" value="P-loop containing nucleoside triphosphate hydrolases"/>
    <property type="match status" value="1"/>
</dbReference>
<dbReference type="PROSITE" id="PS01331">
    <property type="entry name" value="THYMIDYLATE_KINASE"/>
    <property type="match status" value="1"/>
</dbReference>
<evidence type="ECO:0000255" key="1">
    <source>
        <dbReference type="HAMAP-Rule" id="MF_00165"/>
    </source>
</evidence>
<evidence type="ECO:0000305" key="2"/>
<comment type="function">
    <text evidence="1">Phosphorylation of dTMP to form dTDP in both de novo and salvage pathways of dTTP synthesis.</text>
</comment>
<comment type="catalytic activity">
    <reaction evidence="1">
        <text>dTMP + ATP = dTDP + ADP</text>
        <dbReference type="Rhea" id="RHEA:13517"/>
        <dbReference type="ChEBI" id="CHEBI:30616"/>
        <dbReference type="ChEBI" id="CHEBI:58369"/>
        <dbReference type="ChEBI" id="CHEBI:63528"/>
        <dbReference type="ChEBI" id="CHEBI:456216"/>
        <dbReference type="EC" id="2.7.4.9"/>
    </reaction>
</comment>
<comment type="similarity">
    <text evidence="1">Belongs to the thymidylate kinase family.</text>
</comment>
<comment type="sequence caution" evidence="2">
    <conflict type="erroneous initiation">
        <sequence resource="EMBL-CDS" id="AAK87289"/>
    </conflict>
</comment>
<keyword id="KW-0067">ATP-binding</keyword>
<keyword id="KW-0418">Kinase</keyword>
<keyword id="KW-0545">Nucleotide biosynthesis</keyword>
<keyword id="KW-0547">Nucleotide-binding</keyword>
<keyword id="KW-1185">Reference proteome</keyword>
<keyword id="KW-0808">Transferase</keyword>
<feature type="chain" id="PRO_0000155228" description="Thymidylate kinase">
    <location>
        <begin position="1"/>
        <end position="224"/>
    </location>
</feature>
<feature type="binding site" evidence="1">
    <location>
        <begin position="13"/>
        <end position="20"/>
    </location>
    <ligand>
        <name>ATP</name>
        <dbReference type="ChEBI" id="CHEBI:30616"/>
    </ligand>
</feature>
<reference key="1">
    <citation type="journal article" date="2001" name="Science">
        <title>The genome of the natural genetic engineer Agrobacterium tumefaciens C58.</title>
        <authorList>
            <person name="Wood D.W."/>
            <person name="Setubal J.C."/>
            <person name="Kaul R."/>
            <person name="Monks D.E."/>
            <person name="Kitajima J.P."/>
            <person name="Okura V.K."/>
            <person name="Zhou Y."/>
            <person name="Chen L."/>
            <person name="Wood G.E."/>
            <person name="Almeida N.F. Jr."/>
            <person name="Woo L."/>
            <person name="Chen Y."/>
            <person name="Paulsen I.T."/>
            <person name="Eisen J.A."/>
            <person name="Karp P.D."/>
            <person name="Bovee D. Sr."/>
            <person name="Chapman P."/>
            <person name="Clendenning J."/>
            <person name="Deatherage G."/>
            <person name="Gillet W."/>
            <person name="Grant C."/>
            <person name="Kutyavin T."/>
            <person name="Levy R."/>
            <person name="Li M.-J."/>
            <person name="McClelland E."/>
            <person name="Palmieri A."/>
            <person name="Raymond C."/>
            <person name="Rouse G."/>
            <person name="Saenphimmachak C."/>
            <person name="Wu Z."/>
            <person name="Romero P."/>
            <person name="Gordon D."/>
            <person name="Zhang S."/>
            <person name="Yoo H."/>
            <person name="Tao Y."/>
            <person name="Biddle P."/>
            <person name="Jung M."/>
            <person name="Krespan W."/>
            <person name="Perry M."/>
            <person name="Gordon-Kamm B."/>
            <person name="Liao L."/>
            <person name="Kim S."/>
            <person name="Hendrick C."/>
            <person name="Zhao Z.-Y."/>
            <person name="Dolan M."/>
            <person name="Chumley F."/>
            <person name="Tingey S.V."/>
            <person name="Tomb J.-F."/>
            <person name="Gordon M.P."/>
            <person name="Olson M.V."/>
            <person name="Nester E.W."/>
        </authorList>
    </citation>
    <scope>NUCLEOTIDE SEQUENCE [LARGE SCALE GENOMIC DNA]</scope>
    <source>
        <strain>C58 / ATCC 33970</strain>
    </source>
</reference>
<reference key="2">
    <citation type="journal article" date="2001" name="Science">
        <title>Genome sequence of the plant pathogen and biotechnology agent Agrobacterium tumefaciens C58.</title>
        <authorList>
            <person name="Goodner B."/>
            <person name="Hinkle G."/>
            <person name="Gattung S."/>
            <person name="Miller N."/>
            <person name="Blanchard M."/>
            <person name="Qurollo B."/>
            <person name="Goldman B.S."/>
            <person name="Cao Y."/>
            <person name="Askenazi M."/>
            <person name="Halling C."/>
            <person name="Mullin L."/>
            <person name="Houmiel K."/>
            <person name="Gordon J."/>
            <person name="Vaudin M."/>
            <person name="Iartchouk O."/>
            <person name="Epp A."/>
            <person name="Liu F."/>
            <person name="Wollam C."/>
            <person name="Allinger M."/>
            <person name="Doughty D."/>
            <person name="Scott C."/>
            <person name="Lappas C."/>
            <person name="Markelz B."/>
            <person name="Flanagan C."/>
            <person name="Crowell C."/>
            <person name="Gurson J."/>
            <person name="Lomo C."/>
            <person name="Sear C."/>
            <person name="Strub G."/>
            <person name="Cielo C."/>
            <person name="Slater S."/>
        </authorList>
    </citation>
    <scope>NUCLEOTIDE SEQUENCE [LARGE SCALE GENOMIC DNA]</scope>
    <source>
        <strain>C58 / ATCC 33970</strain>
    </source>
</reference>